<reference key="1">
    <citation type="journal article" date="2009" name="PLoS ONE">
        <title>Complete genome sequence of Francisella tularensis subspecies holarctica FTNF002-00.</title>
        <authorList>
            <person name="Barabote R.D."/>
            <person name="Xie G."/>
            <person name="Brettin T.S."/>
            <person name="Hinrichs S.H."/>
            <person name="Fey P.D."/>
            <person name="Jay J.J."/>
            <person name="Engle J.L."/>
            <person name="Godbole S.D."/>
            <person name="Noronha J.M."/>
            <person name="Scheuermann R.H."/>
            <person name="Zhou L.W."/>
            <person name="Lion C."/>
            <person name="Dempsey M.P."/>
        </authorList>
    </citation>
    <scope>NUCLEOTIDE SEQUENCE [LARGE SCALE GENOMIC DNA]</scope>
    <source>
        <strain>FTNF002-00 / FTA</strain>
    </source>
</reference>
<accession>A7N9U8</accession>
<keyword id="KW-0687">Ribonucleoprotein</keyword>
<keyword id="KW-0689">Ribosomal protein</keyword>
<keyword id="KW-0694">RNA-binding</keyword>
<keyword id="KW-0699">rRNA-binding</keyword>
<comment type="function">
    <text evidence="1">One of the primary rRNA binding proteins, it binds directly to 16S rRNA where it nucleates assembly of the body of the 30S subunit.</text>
</comment>
<comment type="function">
    <text evidence="1">With S5 and S12 plays an important role in translational accuracy.</text>
</comment>
<comment type="subunit">
    <text evidence="1">Part of the 30S ribosomal subunit. Contacts protein S5. The interaction surface between S4 and S5 is involved in control of translational fidelity.</text>
</comment>
<comment type="similarity">
    <text evidence="1">Belongs to the universal ribosomal protein uS4 family.</text>
</comment>
<evidence type="ECO:0000255" key="1">
    <source>
        <dbReference type="HAMAP-Rule" id="MF_01306"/>
    </source>
</evidence>
<evidence type="ECO:0000305" key="2"/>
<name>RS4_FRATF</name>
<gene>
    <name evidence="1" type="primary">rpsD</name>
    <name type="ordered locus">FTA_0274</name>
</gene>
<feature type="chain" id="PRO_0000322301" description="Small ribosomal subunit protein uS4">
    <location>
        <begin position="1"/>
        <end position="206"/>
    </location>
</feature>
<feature type="domain" description="S4 RNA-binding" evidence="1">
    <location>
        <begin position="96"/>
        <end position="158"/>
    </location>
</feature>
<organism>
    <name type="scientific">Francisella tularensis subsp. holarctica (strain FTNF002-00 / FTA)</name>
    <dbReference type="NCBI Taxonomy" id="458234"/>
    <lineage>
        <taxon>Bacteria</taxon>
        <taxon>Pseudomonadati</taxon>
        <taxon>Pseudomonadota</taxon>
        <taxon>Gammaproteobacteria</taxon>
        <taxon>Thiotrichales</taxon>
        <taxon>Francisellaceae</taxon>
        <taxon>Francisella</taxon>
    </lineage>
</organism>
<dbReference type="EMBL" id="CP000803">
    <property type="protein sequence ID" value="ABU60751.1"/>
    <property type="molecule type" value="Genomic_DNA"/>
</dbReference>
<dbReference type="RefSeq" id="WP_003014378.1">
    <property type="nucleotide sequence ID" value="NC_009749.1"/>
</dbReference>
<dbReference type="SMR" id="A7N9U8"/>
<dbReference type="GeneID" id="75264237"/>
<dbReference type="KEGG" id="fta:FTA_0274"/>
<dbReference type="HOGENOM" id="CLU_092403_0_2_6"/>
<dbReference type="GO" id="GO:0015935">
    <property type="term" value="C:small ribosomal subunit"/>
    <property type="evidence" value="ECO:0007669"/>
    <property type="project" value="InterPro"/>
</dbReference>
<dbReference type="GO" id="GO:0019843">
    <property type="term" value="F:rRNA binding"/>
    <property type="evidence" value="ECO:0007669"/>
    <property type="project" value="UniProtKB-UniRule"/>
</dbReference>
<dbReference type="GO" id="GO:0003735">
    <property type="term" value="F:structural constituent of ribosome"/>
    <property type="evidence" value="ECO:0007669"/>
    <property type="project" value="InterPro"/>
</dbReference>
<dbReference type="GO" id="GO:0042274">
    <property type="term" value="P:ribosomal small subunit biogenesis"/>
    <property type="evidence" value="ECO:0007669"/>
    <property type="project" value="TreeGrafter"/>
</dbReference>
<dbReference type="GO" id="GO:0006412">
    <property type="term" value="P:translation"/>
    <property type="evidence" value="ECO:0007669"/>
    <property type="project" value="UniProtKB-UniRule"/>
</dbReference>
<dbReference type="CDD" id="cd00165">
    <property type="entry name" value="S4"/>
    <property type="match status" value="1"/>
</dbReference>
<dbReference type="FunFam" id="1.10.1050.10:FF:000001">
    <property type="entry name" value="30S ribosomal protein S4"/>
    <property type="match status" value="1"/>
</dbReference>
<dbReference type="FunFam" id="3.10.290.10:FF:000001">
    <property type="entry name" value="30S ribosomal protein S4"/>
    <property type="match status" value="1"/>
</dbReference>
<dbReference type="Gene3D" id="1.10.1050.10">
    <property type="entry name" value="Ribosomal Protein S4 Delta 41, Chain A, domain 1"/>
    <property type="match status" value="1"/>
</dbReference>
<dbReference type="Gene3D" id="3.10.290.10">
    <property type="entry name" value="RNA-binding S4 domain"/>
    <property type="match status" value="1"/>
</dbReference>
<dbReference type="HAMAP" id="MF_01306_B">
    <property type="entry name" value="Ribosomal_uS4_B"/>
    <property type="match status" value="1"/>
</dbReference>
<dbReference type="InterPro" id="IPR022801">
    <property type="entry name" value="Ribosomal_uS4"/>
</dbReference>
<dbReference type="InterPro" id="IPR005709">
    <property type="entry name" value="Ribosomal_uS4_bac-type"/>
</dbReference>
<dbReference type="InterPro" id="IPR018079">
    <property type="entry name" value="Ribosomal_uS4_CS"/>
</dbReference>
<dbReference type="InterPro" id="IPR001912">
    <property type="entry name" value="Ribosomal_uS4_N"/>
</dbReference>
<dbReference type="InterPro" id="IPR002942">
    <property type="entry name" value="S4_RNA-bd"/>
</dbReference>
<dbReference type="InterPro" id="IPR036986">
    <property type="entry name" value="S4_RNA-bd_sf"/>
</dbReference>
<dbReference type="NCBIfam" id="NF003717">
    <property type="entry name" value="PRK05327.1"/>
    <property type="match status" value="1"/>
</dbReference>
<dbReference type="NCBIfam" id="TIGR01017">
    <property type="entry name" value="rpsD_bact"/>
    <property type="match status" value="1"/>
</dbReference>
<dbReference type="PANTHER" id="PTHR11831">
    <property type="entry name" value="30S 40S RIBOSOMAL PROTEIN"/>
    <property type="match status" value="1"/>
</dbReference>
<dbReference type="PANTHER" id="PTHR11831:SF4">
    <property type="entry name" value="SMALL RIBOSOMAL SUBUNIT PROTEIN US4M"/>
    <property type="match status" value="1"/>
</dbReference>
<dbReference type="Pfam" id="PF00163">
    <property type="entry name" value="Ribosomal_S4"/>
    <property type="match status" value="1"/>
</dbReference>
<dbReference type="Pfam" id="PF01479">
    <property type="entry name" value="S4"/>
    <property type="match status" value="1"/>
</dbReference>
<dbReference type="SMART" id="SM01390">
    <property type="entry name" value="Ribosomal_S4"/>
    <property type="match status" value="1"/>
</dbReference>
<dbReference type="SMART" id="SM00363">
    <property type="entry name" value="S4"/>
    <property type="match status" value="1"/>
</dbReference>
<dbReference type="SUPFAM" id="SSF55174">
    <property type="entry name" value="Alpha-L RNA-binding motif"/>
    <property type="match status" value="1"/>
</dbReference>
<dbReference type="PROSITE" id="PS00632">
    <property type="entry name" value="RIBOSOMAL_S4"/>
    <property type="match status" value="1"/>
</dbReference>
<dbReference type="PROSITE" id="PS50889">
    <property type="entry name" value="S4"/>
    <property type="match status" value="1"/>
</dbReference>
<proteinExistence type="inferred from homology"/>
<protein>
    <recommendedName>
        <fullName evidence="1">Small ribosomal subunit protein uS4</fullName>
    </recommendedName>
    <alternativeName>
        <fullName evidence="2">30S ribosomal protein S4</fullName>
    </alternativeName>
</protein>
<sequence length="206" mass="23237">MARYLGPKCKLSRREGTDLFLKSGVKANDEKCKMNTAPGQHGARRARLSDYGLQLREKQKVRRMYGILEGQFKKYYVEASRRKGNTGATLLELLESRLDNVVYRMGFAATRAEARQLVVHKGIMVNGHTCNVPSAQVKAGDVVAVREKAKKQLRIQNAVELAKHRKELSWIDVNTDSLEGTMKSSPDRSELSADINEQLIIELYSK</sequence>